<keyword id="KW-0067">ATP-binding</keyword>
<keyword id="KW-0436">Ligase</keyword>
<keyword id="KW-0460">Magnesium</keyword>
<keyword id="KW-0464">Manganese</keyword>
<keyword id="KW-0479">Metal-binding</keyword>
<keyword id="KW-0547">Nucleotide-binding</keyword>
<keyword id="KW-0648">Protein biosynthesis</keyword>
<keyword id="KW-1185">Reference proteome</keyword>
<evidence type="ECO:0000255" key="1">
    <source>
        <dbReference type="HAMAP-Rule" id="MF_01552"/>
    </source>
</evidence>
<name>RIMK_PSYIN</name>
<proteinExistence type="inferred from homology"/>
<gene>
    <name evidence="1" type="primary">rimK</name>
    <name type="ordered locus">Ping_2828</name>
</gene>
<organism>
    <name type="scientific">Psychromonas ingrahamii (strain DSM 17664 / CCUG 51855 / 37)</name>
    <dbReference type="NCBI Taxonomy" id="357804"/>
    <lineage>
        <taxon>Bacteria</taxon>
        <taxon>Pseudomonadati</taxon>
        <taxon>Pseudomonadota</taxon>
        <taxon>Gammaproteobacteria</taxon>
        <taxon>Alteromonadales</taxon>
        <taxon>Psychromonadaceae</taxon>
        <taxon>Psychromonas</taxon>
    </lineage>
</organism>
<dbReference type="EC" id="6.3.2.-" evidence="1"/>
<dbReference type="EMBL" id="CP000510">
    <property type="protein sequence ID" value="ABM04534.1"/>
    <property type="molecule type" value="Genomic_DNA"/>
</dbReference>
<dbReference type="RefSeq" id="WP_011771088.1">
    <property type="nucleotide sequence ID" value="NC_008709.1"/>
</dbReference>
<dbReference type="SMR" id="A1SYG9"/>
<dbReference type="STRING" id="357804.Ping_2828"/>
<dbReference type="KEGG" id="pin:Ping_2828"/>
<dbReference type="eggNOG" id="COG0189">
    <property type="taxonomic scope" value="Bacteria"/>
</dbReference>
<dbReference type="HOGENOM" id="CLU_054353_0_1_6"/>
<dbReference type="OrthoDB" id="3865600at2"/>
<dbReference type="Proteomes" id="UP000000639">
    <property type="component" value="Chromosome"/>
</dbReference>
<dbReference type="GO" id="GO:0005737">
    <property type="term" value="C:cytoplasm"/>
    <property type="evidence" value="ECO:0007669"/>
    <property type="project" value="TreeGrafter"/>
</dbReference>
<dbReference type="GO" id="GO:0005524">
    <property type="term" value="F:ATP binding"/>
    <property type="evidence" value="ECO:0007669"/>
    <property type="project" value="UniProtKB-UniRule"/>
</dbReference>
<dbReference type="GO" id="GO:0046872">
    <property type="term" value="F:metal ion binding"/>
    <property type="evidence" value="ECO:0007669"/>
    <property type="project" value="UniProtKB-KW"/>
</dbReference>
<dbReference type="GO" id="GO:0018169">
    <property type="term" value="F:ribosomal S6-glutamic acid ligase activity"/>
    <property type="evidence" value="ECO:0007669"/>
    <property type="project" value="TreeGrafter"/>
</dbReference>
<dbReference type="GO" id="GO:0036211">
    <property type="term" value="P:protein modification process"/>
    <property type="evidence" value="ECO:0007669"/>
    <property type="project" value="InterPro"/>
</dbReference>
<dbReference type="GO" id="GO:0009432">
    <property type="term" value="P:SOS response"/>
    <property type="evidence" value="ECO:0007669"/>
    <property type="project" value="TreeGrafter"/>
</dbReference>
<dbReference type="GO" id="GO:0006412">
    <property type="term" value="P:translation"/>
    <property type="evidence" value="ECO:0007669"/>
    <property type="project" value="UniProtKB-KW"/>
</dbReference>
<dbReference type="FunFam" id="3.40.50.20:FF:000004">
    <property type="entry name" value="Probable alpha-L-glutamate ligase"/>
    <property type="match status" value="1"/>
</dbReference>
<dbReference type="FunFam" id="3.30.1490.20:FF:000005">
    <property type="entry name" value="Probable alpha-L-glutamate ligase 1"/>
    <property type="match status" value="1"/>
</dbReference>
<dbReference type="Gene3D" id="3.40.50.20">
    <property type="match status" value="1"/>
</dbReference>
<dbReference type="Gene3D" id="3.30.1490.20">
    <property type="entry name" value="ATP-grasp fold, A domain"/>
    <property type="match status" value="1"/>
</dbReference>
<dbReference type="Gene3D" id="3.30.470.20">
    <property type="entry name" value="ATP-grasp fold, B domain"/>
    <property type="match status" value="1"/>
</dbReference>
<dbReference type="HAMAP" id="MF_01552">
    <property type="entry name" value="RimK"/>
    <property type="match status" value="1"/>
</dbReference>
<dbReference type="InterPro" id="IPR011761">
    <property type="entry name" value="ATP-grasp"/>
</dbReference>
<dbReference type="InterPro" id="IPR013651">
    <property type="entry name" value="ATP-grasp_RimK-type"/>
</dbReference>
<dbReference type="InterPro" id="IPR013815">
    <property type="entry name" value="ATP_grasp_subdomain_1"/>
</dbReference>
<dbReference type="InterPro" id="IPR023533">
    <property type="entry name" value="RimK"/>
</dbReference>
<dbReference type="InterPro" id="IPR041107">
    <property type="entry name" value="Rimk_N"/>
</dbReference>
<dbReference type="InterPro" id="IPR004666">
    <property type="entry name" value="Rp_bS6_RimK/Lys_biosynth_LsyX"/>
</dbReference>
<dbReference type="NCBIfam" id="NF007764">
    <property type="entry name" value="PRK10446.1"/>
    <property type="match status" value="1"/>
</dbReference>
<dbReference type="NCBIfam" id="TIGR00768">
    <property type="entry name" value="rimK_fam"/>
    <property type="match status" value="1"/>
</dbReference>
<dbReference type="PANTHER" id="PTHR21621:SF7">
    <property type="entry name" value="RIBOSOMAL PROTEIN BS6--L-GLUTAMATE LIGASE"/>
    <property type="match status" value="1"/>
</dbReference>
<dbReference type="PANTHER" id="PTHR21621">
    <property type="entry name" value="RIBOSOMAL PROTEIN S6 MODIFICATION PROTEIN"/>
    <property type="match status" value="1"/>
</dbReference>
<dbReference type="Pfam" id="PF08443">
    <property type="entry name" value="RimK"/>
    <property type="match status" value="1"/>
</dbReference>
<dbReference type="Pfam" id="PF18030">
    <property type="entry name" value="Rimk_N"/>
    <property type="match status" value="1"/>
</dbReference>
<dbReference type="SUPFAM" id="SSF56059">
    <property type="entry name" value="Glutathione synthetase ATP-binding domain-like"/>
    <property type="match status" value="1"/>
</dbReference>
<dbReference type="PROSITE" id="PS50975">
    <property type="entry name" value="ATP_GRASP"/>
    <property type="match status" value="1"/>
</dbReference>
<feature type="chain" id="PRO_1000068853" description="Probable alpha-L-glutamate ligase">
    <location>
        <begin position="1"/>
        <end position="302"/>
    </location>
</feature>
<feature type="domain" description="ATP-grasp" evidence="1">
    <location>
        <begin position="104"/>
        <end position="287"/>
    </location>
</feature>
<feature type="binding site" evidence="1">
    <location>
        <position position="141"/>
    </location>
    <ligand>
        <name>ATP</name>
        <dbReference type="ChEBI" id="CHEBI:30616"/>
    </ligand>
</feature>
<feature type="binding site" evidence="1">
    <location>
        <begin position="178"/>
        <end position="179"/>
    </location>
    <ligand>
        <name>ATP</name>
        <dbReference type="ChEBI" id="CHEBI:30616"/>
    </ligand>
</feature>
<feature type="binding site" evidence="1">
    <location>
        <position position="187"/>
    </location>
    <ligand>
        <name>ATP</name>
        <dbReference type="ChEBI" id="CHEBI:30616"/>
    </ligand>
</feature>
<feature type="binding site" evidence="1">
    <location>
        <begin position="211"/>
        <end position="213"/>
    </location>
    <ligand>
        <name>ATP</name>
        <dbReference type="ChEBI" id="CHEBI:30616"/>
    </ligand>
</feature>
<feature type="binding site" evidence="1">
    <location>
        <position position="248"/>
    </location>
    <ligand>
        <name>Mg(2+)</name>
        <dbReference type="ChEBI" id="CHEBI:18420"/>
        <label>1</label>
    </ligand>
</feature>
<feature type="binding site" evidence="1">
    <location>
        <position position="248"/>
    </location>
    <ligand>
        <name>Mn(2+)</name>
        <dbReference type="ChEBI" id="CHEBI:29035"/>
        <label>1</label>
    </ligand>
</feature>
<feature type="binding site" evidence="1">
    <location>
        <position position="260"/>
    </location>
    <ligand>
        <name>Mg(2+)</name>
        <dbReference type="ChEBI" id="CHEBI:18420"/>
        <label>1</label>
    </ligand>
</feature>
<feature type="binding site" evidence="1">
    <location>
        <position position="260"/>
    </location>
    <ligand>
        <name>Mg(2+)</name>
        <dbReference type="ChEBI" id="CHEBI:18420"/>
        <label>2</label>
    </ligand>
</feature>
<feature type="binding site" evidence="1">
    <location>
        <position position="260"/>
    </location>
    <ligand>
        <name>Mn(2+)</name>
        <dbReference type="ChEBI" id="CHEBI:29035"/>
        <label>1</label>
    </ligand>
</feature>
<feature type="binding site" evidence="1">
    <location>
        <position position="260"/>
    </location>
    <ligand>
        <name>Mn(2+)</name>
        <dbReference type="ChEBI" id="CHEBI:29035"/>
        <label>2</label>
    </ligand>
</feature>
<feature type="binding site" evidence="1">
    <location>
        <position position="262"/>
    </location>
    <ligand>
        <name>Mg(2+)</name>
        <dbReference type="ChEBI" id="CHEBI:18420"/>
        <label>2</label>
    </ligand>
</feature>
<feature type="binding site" evidence="1">
    <location>
        <position position="262"/>
    </location>
    <ligand>
        <name>Mn(2+)</name>
        <dbReference type="ChEBI" id="CHEBI:29035"/>
        <label>2</label>
    </ligand>
</feature>
<accession>A1SYG9</accession>
<sequence>MKIVILSRNKSLYSTRRLKEEGEARGHQIDIIDTLHCYMDITSSRPTVRYQGEELPVYDALIPRIGASVTFYGTAVARQFEVMGTFNINESVAISRSRDKLRSMQLLSRKGIGMPRTGFASKPDNIKDLIKNVGGAPVVIKLLEGTQGIGVVLAETAKTAESIIEAFMGIKANILVQEFIKEAGGADIRCLVIGGKVVAAMKRQGAEGEFRSNLHRGGSAVVVKLTKIERETAVNAAKIMGLNFCGVDLLRSESGPKVMEVNSSPGLEGIETATGKNIAGMVFEFLEKNMKAEHSNKTRGRG</sequence>
<comment type="cofactor">
    <cofactor evidence="1">
        <name>Mg(2+)</name>
        <dbReference type="ChEBI" id="CHEBI:18420"/>
    </cofactor>
    <cofactor evidence="1">
        <name>Mn(2+)</name>
        <dbReference type="ChEBI" id="CHEBI:29035"/>
    </cofactor>
    <text evidence="1">Binds 2 magnesium or manganese ions per subunit.</text>
</comment>
<comment type="similarity">
    <text evidence="1">Belongs to the RimK family.</text>
</comment>
<reference key="1">
    <citation type="journal article" date="2008" name="BMC Genomics">
        <title>Genomics of an extreme psychrophile, Psychromonas ingrahamii.</title>
        <authorList>
            <person name="Riley M."/>
            <person name="Staley J.T."/>
            <person name="Danchin A."/>
            <person name="Wang T.Z."/>
            <person name="Brettin T.S."/>
            <person name="Hauser L.J."/>
            <person name="Land M.L."/>
            <person name="Thompson L.S."/>
        </authorList>
    </citation>
    <scope>NUCLEOTIDE SEQUENCE [LARGE SCALE GENOMIC DNA]</scope>
    <source>
        <strain>DSM 17664 / CCUG 51855 / 37</strain>
    </source>
</reference>
<protein>
    <recommendedName>
        <fullName evidence="1">Probable alpha-L-glutamate ligase</fullName>
        <ecNumber evidence="1">6.3.2.-</ecNumber>
    </recommendedName>
</protein>